<reference key="1">
    <citation type="journal article" date="2006" name="Lancet">
        <title>Complete genome sequence of USA300, an epidemic clone of community-acquired meticillin-resistant Staphylococcus aureus.</title>
        <authorList>
            <person name="Diep B.A."/>
            <person name="Gill S.R."/>
            <person name="Chang R.F."/>
            <person name="Phan T.H."/>
            <person name="Chen J.H."/>
            <person name="Davidson M.G."/>
            <person name="Lin F."/>
            <person name="Lin J."/>
            <person name="Carleton H.A."/>
            <person name="Mongodin E.F."/>
            <person name="Sensabaugh G.F."/>
            <person name="Perdreau-Remington F."/>
        </authorList>
    </citation>
    <scope>NUCLEOTIDE SEQUENCE [LARGE SCALE GENOMIC DNA]</scope>
    <source>
        <strain>USA300</strain>
    </source>
</reference>
<dbReference type="EC" id="1.2.4.2" evidence="1"/>
<dbReference type="EMBL" id="CP000255">
    <property type="protein sequence ID" value="ABD20400.1"/>
    <property type="molecule type" value="Genomic_DNA"/>
</dbReference>
<dbReference type="RefSeq" id="WP_000180666.1">
    <property type="nucleotide sequence ID" value="NZ_CP027476.1"/>
</dbReference>
<dbReference type="SMR" id="Q2FH25"/>
<dbReference type="KEGG" id="saa:SAUSA300_1306"/>
<dbReference type="HOGENOM" id="CLU_004709_1_0_9"/>
<dbReference type="OMA" id="RDSYCRT"/>
<dbReference type="Proteomes" id="UP000001939">
    <property type="component" value="Chromosome"/>
</dbReference>
<dbReference type="GO" id="GO:0005829">
    <property type="term" value="C:cytosol"/>
    <property type="evidence" value="ECO:0007669"/>
    <property type="project" value="TreeGrafter"/>
</dbReference>
<dbReference type="GO" id="GO:0045252">
    <property type="term" value="C:oxoglutarate dehydrogenase complex"/>
    <property type="evidence" value="ECO:0007669"/>
    <property type="project" value="TreeGrafter"/>
</dbReference>
<dbReference type="GO" id="GO:0004591">
    <property type="term" value="F:oxoglutarate dehydrogenase (succinyl-transferring) activity"/>
    <property type="evidence" value="ECO:0007669"/>
    <property type="project" value="UniProtKB-UniRule"/>
</dbReference>
<dbReference type="GO" id="GO:0030976">
    <property type="term" value="F:thiamine pyrophosphate binding"/>
    <property type="evidence" value="ECO:0007669"/>
    <property type="project" value="UniProtKB-UniRule"/>
</dbReference>
<dbReference type="GO" id="GO:0006096">
    <property type="term" value="P:glycolytic process"/>
    <property type="evidence" value="ECO:0007669"/>
    <property type="project" value="UniProtKB-UniRule"/>
</dbReference>
<dbReference type="GO" id="GO:0006099">
    <property type="term" value="P:tricarboxylic acid cycle"/>
    <property type="evidence" value="ECO:0007669"/>
    <property type="project" value="TreeGrafter"/>
</dbReference>
<dbReference type="CDD" id="cd02016">
    <property type="entry name" value="TPP_E1_OGDC_like"/>
    <property type="match status" value="1"/>
</dbReference>
<dbReference type="FunFam" id="3.40.50.11610:FF:000002">
    <property type="entry name" value="2-oxoglutarate dehydrogenase E1 component"/>
    <property type="match status" value="1"/>
</dbReference>
<dbReference type="FunFam" id="3.40.50.970:FF:000036">
    <property type="entry name" value="2-oxoglutarate dehydrogenase E1 component"/>
    <property type="match status" value="1"/>
</dbReference>
<dbReference type="Gene3D" id="3.40.50.12470">
    <property type="match status" value="1"/>
</dbReference>
<dbReference type="Gene3D" id="3.40.50.970">
    <property type="match status" value="1"/>
</dbReference>
<dbReference type="Gene3D" id="3.40.50.11610">
    <property type="entry name" value="Multifunctional 2-oxoglutarate metabolism enzyme, C-terminal domain"/>
    <property type="match status" value="1"/>
</dbReference>
<dbReference type="Gene3D" id="1.10.287.1150">
    <property type="entry name" value="TPP helical domain"/>
    <property type="match status" value="1"/>
</dbReference>
<dbReference type="HAMAP" id="MF_01169">
    <property type="entry name" value="SucA_OdhA"/>
    <property type="match status" value="1"/>
</dbReference>
<dbReference type="InterPro" id="IPR011603">
    <property type="entry name" value="2oxoglutarate_DH_E1"/>
</dbReference>
<dbReference type="InterPro" id="IPR023784">
    <property type="entry name" value="2oxoglutarate_DH_E1_bac"/>
</dbReference>
<dbReference type="InterPro" id="IPR001017">
    <property type="entry name" value="DH_E1"/>
</dbReference>
<dbReference type="InterPro" id="IPR042179">
    <property type="entry name" value="KGD_C_sf"/>
</dbReference>
<dbReference type="InterPro" id="IPR031717">
    <property type="entry name" value="ODO-1/KGD_C"/>
</dbReference>
<dbReference type="InterPro" id="IPR029061">
    <property type="entry name" value="THDP-binding"/>
</dbReference>
<dbReference type="InterPro" id="IPR005475">
    <property type="entry name" value="Transketolase-like_Pyr-bd"/>
</dbReference>
<dbReference type="NCBIfam" id="TIGR00239">
    <property type="entry name" value="2oxo_dh_E1"/>
    <property type="match status" value="1"/>
</dbReference>
<dbReference type="NCBIfam" id="NF006914">
    <property type="entry name" value="PRK09404.1"/>
    <property type="match status" value="1"/>
</dbReference>
<dbReference type="NCBIfam" id="NF008907">
    <property type="entry name" value="PRK12270.1"/>
    <property type="match status" value="1"/>
</dbReference>
<dbReference type="PANTHER" id="PTHR23152:SF4">
    <property type="entry name" value="2-OXOADIPATE DEHYDROGENASE COMPLEX COMPONENT E1"/>
    <property type="match status" value="1"/>
</dbReference>
<dbReference type="PANTHER" id="PTHR23152">
    <property type="entry name" value="2-OXOGLUTARATE DEHYDROGENASE"/>
    <property type="match status" value="1"/>
</dbReference>
<dbReference type="Pfam" id="PF00676">
    <property type="entry name" value="E1_dh"/>
    <property type="match status" value="1"/>
</dbReference>
<dbReference type="Pfam" id="PF16870">
    <property type="entry name" value="OxoGdeHyase_C"/>
    <property type="match status" value="1"/>
</dbReference>
<dbReference type="Pfam" id="PF02779">
    <property type="entry name" value="Transket_pyr"/>
    <property type="match status" value="1"/>
</dbReference>
<dbReference type="PIRSF" id="PIRSF000157">
    <property type="entry name" value="Oxoglu_dh_E1"/>
    <property type="match status" value="1"/>
</dbReference>
<dbReference type="SMART" id="SM00861">
    <property type="entry name" value="Transket_pyr"/>
    <property type="match status" value="1"/>
</dbReference>
<dbReference type="SUPFAM" id="SSF52518">
    <property type="entry name" value="Thiamin diphosphate-binding fold (THDP-binding)"/>
    <property type="match status" value="2"/>
</dbReference>
<evidence type="ECO:0000255" key="1">
    <source>
        <dbReference type="HAMAP-Rule" id="MF_01169"/>
    </source>
</evidence>
<accession>Q2FH25</accession>
<name>ODO1_STAA3</name>
<comment type="function">
    <text evidence="1">E1 component of the 2-oxoglutarate dehydrogenase (OGDH) complex which catalyzes the decarboxylation of 2-oxoglutarate, the first step in the conversion of 2-oxoglutarate to succinyl-CoA and CO(2).</text>
</comment>
<comment type="catalytic activity">
    <reaction evidence="1">
        <text>N(6)-[(R)-lipoyl]-L-lysyl-[protein] + 2-oxoglutarate + H(+) = N(6)-[(R)-S(8)-succinyldihydrolipoyl]-L-lysyl-[protein] + CO2</text>
        <dbReference type="Rhea" id="RHEA:12188"/>
        <dbReference type="Rhea" id="RHEA-COMP:10474"/>
        <dbReference type="Rhea" id="RHEA-COMP:20092"/>
        <dbReference type="ChEBI" id="CHEBI:15378"/>
        <dbReference type="ChEBI" id="CHEBI:16526"/>
        <dbReference type="ChEBI" id="CHEBI:16810"/>
        <dbReference type="ChEBI" id="CHEBI:83099"/>
        <dbReference type="ChEBI" id="CHEBI:83120"/>
        <dbReference type="EC" id="1.2.4.2"/>
    </reaction>
</comment>
<comment type="cofactor">
    <cofactor evidence="1">
        <name>thiamine diphosphate</name>
        <dbReference type="ChEBI" id="CHEBI:58937"/>
    </cofactor>
</comment>
<comment type="subunit">
    <text evidence="1">Homodimer. Part of the 2-oxoglutarate dehydrogenase (OGDH) complex composed of E1 (2-oxoglutarate dehydrogenase), E2 (dihydrolipoamide succinyltransferase) and E3 (dihydrolipoamide dehydrogenase); the complex contains multiple copies of the three enzymatic components (E1, E2 and E3).</text>
</comment>
<comment type="similarity">
    <text evidence="1">Belongs to the alpha-ketoglutarate dehydrogenase family.</text>
</comment>
<proteinExistence type="inferred from homology"/>
<sequence>MTNERKEVSEAPVNFGANLGLMLDLYDDFLQDPSSVPEDLQVLFSTIKNDDSIVPALKSTSSQNSDGTIKRVMRLIDNIRQYGHLKADIYPVNPPKRKHVPKLEIEDFDLDQQTLEGISAGIVSDHFADIYDNAYEAILRMEKRYKGPIAFEYTHINNNTERGWLKRRIETPYKVTLNNNEKRALFKQLAYVEGFEKYLHKNFVGAKRFSIEGVDALVPMLQRTITIAAKEGIKNIQIGMAHRGRLNVLTHVLEKPYEMMISEFMHTDPMKFLPEDGSLQLTAGWTGDVKYHLGGIKTTDSYGTMQRIALANNPSHLEIVAPVVEGRTRAAQDDTQRAGAPTTDHHKAMPIIIHGDAAYPGQGINFETMNLGNLKGYSTGGSLHIITNNRIGFTTEPIDARSTTYSTDVAKGYDVPIFHVNADDVEATIEAIDIAMEFRKEFHKDVVIDLVGYRRFGHNEMDEPSITNPVPYQNIRKHDSVEYVFGKKLVNEGVISEDEMHSFIEQVQKELRQAHDKINKADKMDNPDMEKPADLALPLQADEQSFTFDHLKEINDALLTYPDGFNILKKLNKVLEKRHEPFNKEDGLVDWAQAEQLAFATILQDGTPIRLTGQDSERGTFSHRHAVLHDEQTGETYTPLHHVPDQKATFDIHNSPLSEAAVVGFEYGYNVENKKSFNIWEAQYGDFANMSQMIFDNFLFSSRSKWGERSGLTLFLPHAYEGQGPEHSSARLERFLQLAAENNCTVVNLSSSSNYFHLLRAQAASLDSEQMRPLVVMSPKSLLRNKTVAKPIDEFTSGGFEPILTESYQADKVTKVILATGKMFIDLKEALAKNPDESVLLVAIERLYPFPEEEIEALLAQLPNLEEVSWVQEEPKNQGAWLYVYPYVKVLVADKYDLSYHGRIQRAAPAEGDGEIHKLVQNKIIENALKNN</sequence>
<protein>
    <recommendedName>
        <fullName evidence="1">2-oxoglutarate dehydrogenase E1 component</fullName>
        <ecNumber evidence="1">1.2.4.2</ecNumber>
    </recommendedName>
    <alternativeName>
        <fullName evidence="1">Alpha-ketoglutarate dehydrogenase</fullName>
    </alternativeName>
</protein>
<keyword id="KW-0324">Glycolysis</keyword>
<keyword id="KW-0560">Oxidoreductase</keyword>
<keyword id="KW-0786">Thiamine pyrophosphate</keyword>
<gene>
    <name evidence="1" type="primary">odhA</name>
    <name type="ordered locus">SAUSA300_1306</name>
</gene>
<organism>
    <name type="scientific">Staphylococcus aureus (strain USA300)</name>
    <dbReference type="NCBI Taxonomy" id="367830"/>
    <lineage>
        <taxon>Bacteria</taxon>
        <taxon>Bacillati</taxon>
        <taxon>Bacillota</taxon>
        <taxon>Bacilli</taxon>
        <taxon>Bacillales</taxon>
        <taxon>Staphylococcaceae</taxon>
        <taxon>Staphylococcus</taxon>
    </lineage>
</organism>
<feature type="chain" id="PRO_1000065702" description="2-oxoglutarate dehydrogenase E1 component">
    <location>
        <begin position="1"/>
        <end position="932"/>
    </location>
</feature>